<reference key="1">
    <citation type="journal article" date="2000" name="Nature">
        <title>Sequence and analysis of chromosome 1 of the plant Arabidopsis thaliana.</title>
        <authorList>
            <person name="Theologis A."/>
            <person name="Ecker J.R."/>
            <person name="Palm C.J."/>
            <person name="Federspiel N.A."/>
            <person name="Kaul S."/>
            <person name="White O."/>
            <person name="Alonso J."/>
            <person name="Altafi H."/>
            <person name="Araujo R."/>
            <person name="Bowman C.L."/>
            <person name="Brooks S.Y."/>
            <person name="Buehler E."/>
            <person name="Chan A."/>
            <person name="Chao Q."/>
            <person name="Chen H."/>
            <person name="Cheuk R.F."/>
            <person name="Chin C.W."/>
            <person name="Chung M.K."/>
            <person name="Conn L."/>
            <person name="Conway A.B."/>
            <person name="Conway A.R."/>
            <person name="Creasy T.H."/>
            <person name="Dewar K."/>
            <person name="Dunn P."/>
            <person name="Etgu P."/>
            <person name="Feldblyum T.V."/>
            <person name="Feng J.-D."/>
            <person name="Fong B."/>
            <person name="Fujii C.Y."/>
            <person name="Gill J.E."/>
            <person name="Goldsmith A.D."/>
            <person name="Haas B."/>
            <person name="Hansen N.F."/>
            <person name="Hughes B."/>
            <person name="Huizar L."/>
            <person name="Hunter J.L."/>
            <person name="Jenkins J."/>
            <person name="Johnson-Hopson C."/>
            <person name="Khan S."/>
            <person name="Khaykin E."/>
            <person name="Kim C.J."/>
            <person name="Koo H.L."/>
            <person name="Kremenetskaia I."/>
            <person name="Kurtz D.B."/>
            <person name="Kwan A."/>
            <person name="Lam B."/>
            <person name="Langin-Hooper S."/>
            <person name="Lee A."/>
            <person name="Lee J.M."/>
            <person name="Lenz C.A."/>
            <person name="Li J.H."/>
            <person name="Li Y.-P."/>
            <person name="Lin X."/>
            <person name="Liu S.X."/>
            <person name="Liu Z.A."/>
            <person name="Luros J.S."/>
            <person name="Maiti R."/>
            <person name="Marziali A."/>
            <person name="Militscher J."/>
            <person name="Miranda M."/>
            <person name="Nguyen M."/>
            <person name="Nierman W.C."/>
            <person name="Osborne B.I."/>
            <person name="Pai G."/>
            <person name="Peterson J."/>
            <person name="Pham P.K."/>
            <person name="Rizzo M."/>
            <person name="Rooney T."/>
            <person name="Rowley D."/>
            <person name="Sakano H."/>
            <person name="Salzberg S.L."/>
            <person name="Schwartz J.R."/>
            <person name="Shinn P."/>
            <person name="Southwick A.M."/>
            <person name="Sun H."/>
            <person name="Tallon L.J."/>
            <person name="Tambunga G."/>
            <person name="Toriumi M.J."/>
            <person name="Town C.D."/>
            <person name="Utterback T."/>
            <person name="Van Aken S."/>
            <person name="Vaysberg M."/>
            <person name="Vysotskaia V.S."/>
            <person name="Walker M."/>
            <person name="Wu D."/>
            <person name="Yu G."/>
            <person name="Fraser C.M."/>
            <person name="Venter J.C."/>
            <person name="Davis R.W."/>
        </authorList>
    </citation>
    <scope>NUCLEOTIDE SEQUENCE [LARGE SCALE GENOMIC DNA]</scope>
    <source>
        <strain>cv. Columbia</strain>
    </source>
</reference>
<reference key="2">
    <citation type="journal article" date="2017" name="Plant J.">
        <title>Araport11: a complete reannotation of the Arabidopsis thaliana reference genome.</title>
        <authorList>
            <person name="Cheng C.Y."/>
            <person name="Krishnakumar V."/>
            <person name="Chan A.P."/>
            <person name="Thibaud-Nissen F."/>
            <person name="Schobel S."/>
            <person name="Town C.D."/>
        </authorList>
    </citation>
    <scope>GENOME REANNOTATION</scope>
    <source>
        <strain>cv. Columbia</strain>
    </source>
</reference>
<reference key="3">
    <citation type="journal article" date="2003" name="Science">
        <title>Empirical analysis of transcriptional activity in the Arabidopsis genome.</title>
        <authorList>
            <person name="Yamada K."/>
            <person name="Lim J."/>
            <person name="Dale J.M."/>
            <person name="Chen H."/>
            <person name="Shinn P."/>
            <person name="Palm C.J."/>
            <person name="Southwick A.M."/>
            <person name="Wu H.C."/>
            <person name="Kim C.J."/>
            <person name="Nguyen M."/>
            <person name="Pham P.K."/>
            <person name="Cheuk R.F."/>
            <person name="Karlin-Newmann G."/>
            <person name="Liu S.X."/>
            <person name="Lam B."/>
            <person name="Sakano H."/>
            <person name="Wu T."/>
            <person name="Yu G."/>
            <person name="Miranda M."/>
            <person name="Quach H.L."/>
            <person name="Tripp M."/>
            <person name="Chang C.H."/>
            <person name="Lee J.M."/>
            <person name="Toriumi M.J."/>
            <person name="Chan M.M."/>
            <person name="Tang C.C."/>
            <person name="Onodera C.S."/>
            <person name="Deng J.M."/>
            <person name="Akiyama K."/>
            <person name="Ansari Y."/>
            <person name="Arakawa T."/>
            <person name="Banh J."/>
            <person name="Banno F."/>
            <person name="Bowser L."/>
            <person name="Brooks S.Y."/>
            <person name="Carninci P."/>
            <person name="Chao Q."/>
            <person name="Choy N."/>
            <person name="Enju A."/>
            <person name="Goldsmith A.D."/>
            <person name="Gurjal M."/>
            <person name="Hansen N.F."/>
            <person name="Hayashizaki Y."/>
            <person name="Johnson-Hopson C."/>
            <person name="Hsuan V.W."/>
            <person name="Iida K."/>
            <person name="Karnes M."/>
            <person name="Khan S."/>
            <person name="Koesema E."/>
            <person name="Ishida J."/>
            <person name="Jiang P.X."/>
            <person name="Jones T."/>
            <person name="Kawai J."/>
            <person name="Kamiya A."/>
            <person name="Meyers C."/>
            <person name="Nakajima M."/>
            <person name="Narusaka M."/>
            <person name="Seki M."/>
            <person name="Sakurai T."/>
            <person name="Satou M."/>
            <person name="Tamse R."/>
            <person name="Vaysberg M."/>
            <person name="Wallender E.K."/>
            <person name="Wong C."/>
            <person name="Yamamura Y."/>
            <person name="Yuan S."/>
            <person name="Shinozaki K."/>
            <person name="Davis R.W."/>
            <person name="Theologis A."/>
            <person name="Ecker J.R."/>
        </authorList>
    </citation>
    <scope>NUCLEOTIDE SEQUENCE [LARGE SCALE MRNA]</scope>
    <source>
        <strain>cv. Columbia</strain>
    </source>
</reference>
<reference key="4">
    <citation type="submission" date="2002-03" db="EMBL/GenBank/DDBJ databases">
        <title>Full-length cDNA from Arabidopsis thaliana.</title>
        <authorList>
            <person name="Brover V.V."/>
            <person name="Troukhan M.E."/>
            <person name="Alexandrov N.A."/>
            <person name="Lu Y.-P."/>
            <person name="Flavell R.B."/>
            <person name="Feldmann K.A."/>
        </authorList>
    </citation>
    <scope>NUCLEOTIDE SEQUENCE [LARGE SCALE MRNA]</scope>
</reference>
<reference key="5">
    <citation type="journal article" date="2003" name="New Phytol.">
        <title>Calmodulins and related potential calcium sensors of Arabidopsis.</title>
        <authorList>
            <person name="McCormack E."/>
            <person name="Braam J."/>
        </authorList>
    </citation>
    <scope>GENE FAMILY</scope>
    <scope>NOMENCLATURE</scope>
</reference>
<keyword id="KW-0106">Calcium</keyword>
<keyword id="KW-0479">Metal-binding</keyword>
<keyword id="KW-1185">Reference proteome</keyword>
<keyword id="KW-0677">Repeat</keyword>
<comment type="function">
    <text evidence="1">Potential calcium sensor.</text>
</comment>
<comment type="caution">
    <text evidence="3">Although assigned as a calmodulin family member by Ref.5, it only contains EF-hand domains.</text>
</comment>
<organism>
    <name type="scientific">Arabidopsis thaliana</name>
    <name type="common">Mouse-ear cress</name>
    <dbReference type="NCBI Taxonomy" id="3702"/>
    <lineage>
        <taxon>Eukaryota</taxon>
        <taxon>Viridiplantae</taxon>
        <taxon>Streptophyta</taxon>
        <taxon>Embryophyta</taxon>
        <taxon>Tracheophyta</taxon>
        <taxon>Spermatophyta</taxon>
        <taxon>Magnoliopsida</taxon>
        <taxon>eudicotyledons</taxon>
        <taxon>Gunneridae</taxon>
        <taxon>Pentapetalae</taxon>
        <taxon>rosids</taxon>
        <taxon>malvids</taxon>
        <taxon>Brassicales</taxon>
        <taxon>Brassicaceae</taxon>
        <taxon>Camelineae</taxon>
        <taxon>Arabidopsis</taxon>
    </lineage>
</organism>
<sequence length="157" mass="17654">MSKNVSRNCLGSMEDIKKVFQRFDKNNDGKISIDELKDVIGALSPNASQEETKAMMKEFDLDGNGFIDLDEFVALFQISDQSSNNSAIRDLKEAFDLYDLDRNGRISANELHSVMKNLGEKCSIQDCQRMINKVDSDGDGCVDFEEFKKMMMINGSA</sequence>
<name>CML23_ARATH</name>
<protein>
    <recommendedName>
        <fullName>Probable calcium-binding protein CML23</fullName>
    </recommendedName>
    <alternativeName>
        <fullName>Calmodulin-like protein 23</fullName>
    </alternativeName>
</protein>
<feature type="chain" id="PRO_0000342952" description="Probable calcium-binding protein CML23">
    <location>
        <begin position="1"/>
        <end position="157"/>
    </location>
</feature>
<feature type="domain" description="EF-hand 1" evidence="2">
    <location>
        <begin position="11"/>
        <end position="46"/>
    </location>
</feature>
<feature type="domain" description="EF-hand 2" evidence="2">
    <location>
        <begin position="47"/>
        <end position="82"/>
    </location>
</feature>
<feature type="domain" description="EF-hand 3" evidence="2">
    <location>
        <begin position="86"/>
        <end position="121"/>
    </location>
</feature>
<feature type="domain" description="EF-hand 4" evidence="2">
    <location>
        <begin position="122"/>
        <end position="157"/>
    </location>
</feature>
<feature type="binding site" evidence="2">
    <location>
        <position position="24"/>
    </location>
    <ligand>
        <name>Ca(2+)</name>
        <dbReference type="ChEBI" id="CHEBI:29108"/>
        <label>1</label>
    </ligand>
</feature>
<feature type="binding site" evidence="2">
    <location>
        <position position="26"/>
    </location>
    <ligand>
        <name>Ca(2+)</name>
        <dbReference type="ChEBI" id="CHEBI:29108"/>
        <label>1</label>
    </ligand>
</feature>
<feature type="binding site" evidence="2">
    <location>
        <position position="28"/>
    </location>
    <ligand>
        <name>Ca(2+)</name>
        <dbReference type="ChEBI" id="CHEBI:29108"/>
        <label>1</label>
    </ligand>
</feature>
<feature type="binding site" evidence="2">
    <location>
        <position position="30"/>
    </location>
    <ligand>
        <name>Ca(2+)</name>
        <dbReference type="ChEBI" id="CHEBI:29108"/>
        <label>1</label>
    </ligand>
</feature>
<feature type="binding site" evidence="2">
    <location>
        <position position="35"/>
    </location>
    <ligand>
        <name>Ca(2+)</name>
        <dbReference type="ChEBI" id="CHEBI:29108"/>
        <label>1</label>
    </ligand>
</feature>
<feature type="binding site" evidence="2">
    <location>
        <position position="60"/>
    </location>
    <ligand>
        <name>Ca(2+)</name>
        <dbReference type="ChEBI" id="CHEBI:29108"/>
        <label>2</label>
    </ligand>
</feature>
<feature type="binding site" evidence="2">
    <location>
        <position position="62"/>
    </location>
    <ligand>
        <name>Ca(2+)</name>
        <dbReference type="ChEBI" id="CHEBI:29108"/>
        <label>2</label>
    </ligand>
</feature>
<feature type="binding site" evidence="2">
    <location>
        <position position="64"/>
    </location>
    <ligand>
        <name>Ca(2+)</name>
        <dbReference type="ChEBI" id="CHEBI:29108"/>
        <label>2</label>
    </ligand>
</feature>
<feature type="binding site" evidence="2">
    <location>
        <position position="71"/>
    </location>
    <ligand>
        <name>Ca(2+)</name>
        <dbReference type="ChEBI" id="CHEBI:29108"/>
        <label>2</label>
    </ligand>
</feature>
<feature type="binding site" evidence="2">
    <location>
        <position position="99"/>
    </location>
    <ligand>
        <name>Ca(2+)</name>
        <dbReference type="ChEBI" id="CHEBI:29108"/>
        <label>3</label>
    </ligand>
</feature>
<feature type="binding site" evidence="2">
    <location>
        <position position="101"/>
    </location>
    <ligand>
        <name>Ca(2+)</name>
        <dbReference type="ChEBI" id="CHEBI:29108"/>
        <label>3</label>
    </ligand>
</feature>
<feature type="binding site" evidence="2">
    <location>
        <position position="103"/>
    </location>
    <ligand>
        <name>Ca(2+)</name>
        <dbReference type="ChEBI" id="CHEBI:29108"/>
        <label>3</label>
    </ligand>
</feature>
<feature type="binding site" evidence="2">
    <location>
        <position position="105"/>
    </location>
    <ligand>
        <name>Ca(2+)</name>
        <dbReference type="ChEBI" id="CHEBI:29108"/>
        <label>3</label>
    </ligand>
</feature>
<feature type="binding site" evidence="2">
    <location>
        <position position="110"/>
    </location>
    <ligand>
        <name>Ca(2+)</name>
        <dbReference type="ChEBI" id="CHEBI:29108"/>
        <label>3</label>
    </ligand>
</feature>
<feature type="binding site" evidence="2">
    <location>
        <position position="135"/>
    </location>
    <ligand>
        <name>Ca(2+)</name>
        <dbReference type="ChEBI" id="CHEBI:29108"/>
        <label>4</label>
    </ligand>
</feature>
<feature type="binding site" evidence="2">
    <location>
        <position position="137"/>
    </location>
    <ligand>
        <name>Ca(2+)</name>
        <dbReference type="ChEBI" id="CHEBI:29108"/>
        <label>4</label>
    </ligand>
</feature>
<feature type="binding site" evidence="2">
    <location>
        <position position="139"/>
    </location>
    <ligand>
        <name>Ca(2+)</name>
        <dbReference type="ChEBI" id="CHEBI:29108"/>
        <label>4</label>
    </ligand>
</feature>
<feature type="binding site" evidence="2">
    <location>
        <position position="141"/>
    </location>
    <ligand>
        <name>Ca(2+)</name>
        <dbReference type="ChEBI" id="CHEBI:29108"/>
        <label>4</label>
    </ligand>
</feature>
<feature type="binding site" evidence="2">
    <location>
        <position position="146"/>
    </location>
    <ligand>
        <name>Ca(2+)</name>
        <dbReference type="ChEBI" id="CHEBI:29108"/>
        <label>4</label>
    </ligand>
</feature>
<feature type="sequence conflict" description="In Ref. 4; AAM67124." evidence="3" ref="4">
    <original>N</original>
    <variation>S</variation>
    <location>
        <position position="132"/>
    </location>
</feature>
<gene>
    <name type="primary">CML23</name>
    <name type="ordered locus">At1g66400</name>
    <name type="ORF">T27F4.15</name>
</gene>
<evidence type="ECO:0000250" key="1"/>
<evidence type="ECO:0000255" key="2">
    <source>
        <dbReference type="PROSITE-ProRule" id="PRU00448"/>
    </source>
</evidence>
<evidence type="ECO:0000305" key="3"/>
<accession>Q9C8Y1</accession>
<accession>Q8L8T8</accession>
<dbReference type="EMBL" id="AC020665">
    <property type="protein sequence ID" value="AAG52166.1"/>
    <property type="molecule type" value="Genomic_DNA"/>
</dbReference>
<dbReference type="EMBL" id="CP002684">
    <property type="protein sequence ID" value="AEE34504.1"/>
    <property type="molecule type" value="Genomic_DNA"/>
</dbReference>
<dbReference type="EMBL" id="AY063853">
    <property type="protein sequence ID" value="AAL36209.1"/>
    <property type="molecule type" value="mRNA"/>
</dbReference>
<dbReference type="EMBL" id="AY117325">
    <property type="protein sequence ID" value="AAM51400.1"/>
    <property type="molecule type" value="mRNA"/>
</dbReference>
<dbReference type="EMBL" id="AY088814">
    <property type="protein sequence ID" value="AAM67124.1"/>
    <property type="molecule type" value="mRNA"/>
</dbReference>
<dbReference type="PIR" id="D96689">
    <property type="entry name" value="D96689"/>
</dbReference>
<dbReference type="RefSeq" id="NP_564874.1">
    <property type="nucleotide sequence ID" value="NM_105311.3"/>
</dbReference>
<dbReference type="SMR" id="Q9C8Y1"/>
<dbReference type="FunCoup" id="Q9C8Y1">
    <property type="interactions" value="258"/>
</dbReference>
<dbReference type="STRING" id="3702.Q9C8Y1"/>
<dbReference type="PaxDb" id="3702-AT1G66400.1"/>
<dbReference type="ProteomicsDB" id="240997"/>
<dbReference type="EnsemblPlants" id="AT1G66400.1">
    <property type="protein sequence ID" value="AT1G66400.1"/>
    <property type="gene ID" value="AT1G66400"/>
</dbReference>
<dbReference type="GeneID" id="842958"/>
<dbReference type="Gramene" id="AT1G66400.1">
    <property type="protein sequence ID" value="AT1G66400.1"/>
    <property type="gene ID" value="AT1G66400"/>
</dbReference>
<dbReference type="KEGG" id="ath:AT1G66400"/>
<dbReference type="Araport" id="AT1G66400"/>
<dbReference type="TAIR" id="AT1G66400">
    <property type="gene designation" value="CML23"/>
</dbReference>
<dbReference type="eggNOG" id="KOG0027">
    <property type="taxonomic scope" value="Eukaryota"/>
</dbReference>
<dbReference type="HOGENOM" id="CLU_061288_20_7_1"/>
<dbReference type="InParanoid" id="Q9C8Y1"/>
<dbReference type="OMA" id="FHCNDAG"/>
<dbReference type="PhylomeDB" id="Q9C8Y1"/>
<dbReference type="PRO" id="PR:Q9C8Y1"/>
<dbReference type="Proteomes" id="UP000006548">
    <property type="component" value="Chromosome 1"/>
</dbReference>
<dbReference type="ExpressionAtlas" id="Q9C8Y1">
    <property type="expression patterns" value="baseline and differential"/>
</dbReference>
<dbReference type="GO" id="GO:0005509">
    <property type="term" value="F:calcium ion binding"/>
    <property type="evidence" value="ECO:0007669"/>
    <property type="project" value="InterPro"/>
</dbReference>
<dbReference type="GO" id="GO:0009909">
    <property type="term" value="P:regulation of flower development"/>
    <property type="evidence" value="ECO:0000316"/>
    <property type="project" value="TAIR"/>
</dbReference>
<dbReference type="GO" id="GO:0080164">
    <property type="term" value="P:regulation of nitric oxide metabolic process"/>
    <property type="evidence" value="ECO:0000316"/>
    <property type="project" value="TAIR"/>
</dbReference>
<dbReference type="FunFam" id="1.10.238.10:FF:000203">
    <property type="entry name" value="Probable calcium-binding protein CML27"/>
    <property type="match status" value="1"/>
</dbReference>
<dbReference type="Gene3D" id="1.10.238.10">
    <property type="entry name" value="EF-hand"/>
    <property type="match status" value="2"/>
</dbReference>
<dbReference type="InterPro" id="IPR011992">
    <property type="entry name" value="EF-hand-dom_pair"/>
</dbReference>
<dbReference type="InterPro" id="IPR018247">
    <property type="entry name" value="EF_Hand_1_Ca_BS"/>
</dbReference>
<dbReference type="InterPro" id="IPR002048">
    <property type="entry name" value="EF_hand_dom"/>
</dbReference>
<dbReference type="InterPro" id="IPR039647">
    <property type="entry name" value="EF_hand_pair_protein_CML-like"/>
</dbReference>
<dbReference type="PANTHER" id="PTHR10891">
    <property type="entry name" value="EF-HAND CALCIUM-BINDING DOMAIN CONTAINING PROTEIN"/>
    <property type="match status" value="1"/>
</dbReference>
<dbReference type="Pfam" id="PF13499">
    <property type="entry name" value="EF-hand_7"/>
    <property type="match status" value="2"/>
</dbReference>
<dbReference type="SMART" id="SM00054">
    <property type="entry name" value="EFh"/>
    <property type="match status" value="4"/>
</dbReference>
<dbReference type="SUPFAM" id="SSF47473">
    <property type="entry name" value="EF-hand"/>
    <property type="match status" value="1"/>
</dbReference>
<dbReference type="PROSITE" id="PS00018">
    <property type="entry name" value="EF_HAND_1"/>
    <property type="match status" value="4"/>
</dbReference>
<dbReference type="PROSITE" id="PS50222">
    <property type="entry name" value="EF_HAND_2"/>
    <property type="match status" value="4"/>
</dbReference>
<proteinExistence type="evidence at transcript level"/>